<dbReference type="EMBL" id="AB169659">
    <property type="protein sequence ID" value="BAE01740.1"/>
    <property type="molecule type" value="mRNA"/>
</dbReference>
<dbReference type="RefSeq" id="NP_001306515.1">
    <property type="nucleotide sequence ID" value="NM_001319586.1"/>
</dbReference>
<dbReference type="RefSeq" id="XP_045244833.1">
    <property type="nucleotide sequence ID" value="XM_045388898.2"/>
</dbReference>
<dbReference type="STRING" id="9541.ENSMFAP00000043522"/>
<dbReference type="GlyCosmos" id="Q4R585">
    <property type="glycosylation" value="1 site, No reported glycans"/>
</dbReference>
<dbReference type="GeneID" id="101865264"/>
<dbReference type="VEuPathDB" id="HostDB:ENSMFAG00000039169"/>
<dbReference type="eggNOG" id="KOG4251">
    <property type="taxonomic scope" value="Eukaryota"/>
</dbReference>
<dbReference type="Proteomes" id="UP000233100">
    <property type="component" value="Chromosome 1"/>
</dbReference>
<dbReference type="GO" id="GO:0005783">
    <property type="term" value="C:endoplasmic reticulum"/>
    <property type="evidence" value="ECO:0007669"/>
    <property type="project" value="TreeGrafter"/>
</dbReference>
<dbReference type="GO" id="GO:0005796">
    <property type="term" value="C:Golgi lumen"/>
    <property type="evidence" value="ECO:0007669"/>
    <property type="project" value="UniProtKB-SubCell"/>
</dbReference>
<dbReference type="GO" id="GO:0005509">
    <property type="term" value="F:calcium ion binding"/>
    <property type="evidence" value="ECO:0007669"/>
    <property type="project" value="InterPro"/>
</dbReference>
<dbReference type="GO" id="GO:0017156">
    <property type="term" value="P:calcium-ion regulated exocytosis"/>
    <property type="evidence" value="ECO:0007669"/>
    <property type="project" value="TreeGrafter"/>
</dbReference>
<dbReference type="CDD" id="cd16225">
    <property type="entry name" value="EFh_CREC_cab45"/>
    <property type="match status" value="1"/>
</dbReference>
<dbReference type="FunFam" id="1.10.238.10:FF:000120">
    <property type="entry name" value="45 kDa calcium-binding protein"/>
    <property type="match status" value="1"/>
</dbReference>
<dbReference type="FunFam" id="1.10.238.10:FF:000207">
    <property type="entry name" value="Putative 45 kDa calcium-binding protein"/>
    <property type="match status" value="1"/>
</dbReference>
<dbReference type="Gene3D" id="1.10.238.10">
    <property type="entry name" value="EF-hand"/>
    <property type="match status" value="2"/>
</dbReference>
<dbReference type="InterPro" id="IPR027240">
    <property type="entry name" value="CAB45_EFh"/>
</dbReference>
<dbReference type="InterPro" id="IPR011992">
    <property type="entry name" value="EF-hand-dom_pair"/>
</dbReference>
<dbReference type="InterPro" id="IPR018247">
    <property type="entry name" value="EF_Hand_1_Ca_BS"/>
</dbReference>
<dbReference type="InterPro" id="IPR002048">
    <property type="entry name" value="EF_hand_dom"/>
</dbReference>
<dbReference type="PANTHER" id="PTHR10827:SF98">
    <property type="entry name" value="45 KDA CALCIUM-BINDING PROTEIN"/>
    <property type="match status" value="1"/>
</dbReference>
<dbReference type="PANTHER" id="PTHR10827">
    <property type="entry name" value="RETICULOCALBIN"/>
    <property type="match status" value="1"/>
</dbReference>
<dbReference type="Pfam" id="PF13202">
    <property type="entry name" value="EF-hand_5"/>
    <property type="match status" value="1"/>
</dbReference>
<dbReference type="Pfam" id="PF13499">
    <property type="entry name" value="EF-hand_7"/>
    <property type="match status" value="1"/>
</dbReference>
<dbReference type="SMART" id="SM00054">
    <property type="entry name" value="EFh"/>
    <property type="match status" value="4"/>
</dbReference>
<dbReference type="SUPFAM" id="SSF47473">
    <property type="entry name" value="EF-hand"/>
    <property type="match status" value="1"/>
</dbReference>
<dbReference type="PROSITE" id="PS00018">
    <property type="entry name" value="EF_HAND_1"/>
    <property type="match status" value="5"/>
</dbReference>
<dbReference type="PROSITE" id="PS50222">
    <property type="entry name" value="EF_HAND_2"/>
    <property type="match status" value="5"/>
</dbReference>
<name>CAB45_MACFA</name>
<protein>
    <recommendedName>
        <fullName>45 kDa calcium-binding protein</fullName>
        <shortName>Cab45</shortName>
    </recommendedName>
    <alternativeName>
        <fullName>Stromal cell-derived factor 4</fullName>
        <shortName>SDF-4</shortName>
    </alternativeName>
</protein>
<gene>
    <name type="primary">SDF4</name>
    <name type="synonym">CAB45</name>
    <name type="ORF">QccE-14948</name>
</gene>
<organism>
    <name type="scientific">Macaca fascicularis</name>
    <name type="common">Crab-eating macaque</name>
    <name type="synonym">Cynomolgus monkey</name>
    <dbReference type="NCBI Taxonomy" id="9541"/>
    <lineage>
        <taxon>Eukaryota</taxon>
        <taxon>Metazoa</taxon>
        <taxon>Chordata</taxon>
        <taxon>Craniata</taxon>
        <taxon>Vertebrata</taxon>
        <taxon>Euteleostomi</taxon>
        <taxon>Mammalia</taxon>
        <taxon>Eutheria</taxon>
        <taxon>Euarchontoglires</taxon>
        <taxon>Primates</taxon>
        <taxon>Haplorrhini</taxon>
        <taxon>Catarrhini</taxon>
        <taxon>Cercopithecidae</taxon>
        <taxon>Cercopithecinae</taxon>
        <taxon>Macaca</taxon>
    </lineage>
</organism>
<sequence>MVWSWVAMASRWGPLVGLAPRCLWLLGAVLLMDASARPANHSSTRERAANREENEILPPDHLNGVKLEMDGHLNRGFHQEVFLGKDLGGFEEDVEPRRSRRKLMVIFSKVDVNTDRKISAKEMQRWIMEKTAEHFQEAMEESKTHFRAVDPDGDGHVSWDEYKVKFLASKGHSEKEVADAIRLNEELKVDEETQEVLENLKDRWYQADSPPADLLLTEEEFLSFLHPEHSRGMLRFMVKEIVRDLGEAGSSLAGAPGPGDQRQGPGIAGKSGKVLREPQPGCGLIRSRLTDQDGDKQLSLPEFVSLPVGTVENQQGQDIDDNWVKDRKKEFEELIDSNHDGIVTAEELESYMDPMNEYNALNEAKQMIAVADENQNHHLEPEEVLKYSEFFTGSKLVDYARSVHEEF</sequence>
<evidence type="ECO:0000250" key="1"/>
<evidence type="ECO:0000250" key="2">
    <source>
        <dbReference type="UniProtKB" id="Q61112"/>
    </source>
</evidence>
<evidence type="ECO:0000250" key="3">
    <source>
        <dbReference type="UniProtKB" id="Q9BRK5"/>
    </source>
</evidence>
<evidence type="ECO:0000255" key="4"/>
<evidence type="ECO:0000255" key="5">
    <source>
        <dbReference type="PROSITE-ProRule" id="PRU00448"/>
    </source>
</evidence>
<evidence type="ECO:0000256" key="6">
    <source>
        <dbReference type="SAM" id="MobiDB-lite"/>
    </source>
</evidence>
<evidence type="ECO:0000305" key="7"/>
<proteinExistence type="evidence at transcript level"/>
<feature type="signal peptide" evidence="4">
    <location>
        <begin position="1"/>
        <end position="35"/>
    </location>
</feature>
<feature type="chain" id="PRO_0000377517" description="45 kDa calcium-binding protein">
    <location>
        <begin position="36"/>
        <end position="407"/>
    </location>
</feature>
<feature type="domain" description="EF-hand 1" evidence="5">
    <location>
        <begin position="98"/>
        <end position="133"/>
    </location>
</feature>
<feature type="domain" description="EF-hand 2" evidence="5">
    <location>
        <begin position="137"/>
        <end position="172"/>
    </location>
</feature>
<feature type="domain" description="EF-hand 3" evidence="5">
    <location>
        <begin position="291"/>
        <end position="313"/>
    </location>
</feature>
<feature type="domain" description="EF-hand 4" evidence="5">
    <location>
        <begin position="323"/>
        <end position="358"/>
    </location>
</feature>
<feature type="domain" description="EF-hand 5" evidence="5">
    <location>
        <begin position="359"/>
        <end position="394"/>
    </location>
</feature>
<feature type="region of interest" description="Disordered" evidence="6">
    <location>
        <begin position="249"/>
        <end position="282"/>
    </location>
</feature>
<feature type="region of interest" description="Necessary for intracellular retention in Golgi apparatus lumen" evidence="1">
    <location>
        <begin position="354"/>
        <end position="407"/>
    </location>
</feature>
<feature type="compositionally biased region" description="Low complexity" evidence="6">
    <location>
        <begin position="249"/>
        <end position="259"/>
    </location>
</feature>
<feature type="binding site" evidence="5">
    <location>
        <position position="111"/>
    </location>
    <ligand>
        <name>Ca(2+)</name>
        <dbReference type="ChEBI" id="CHEBI:29108"/>
        <label>1</label>
    </ligand>
</feature>
<feature type="binding site" evidence="5">
    <location>
        <position position="113"/>
    </location>
    <ligand>
        <name>Ca(2+)</name>
        <dbReference type="ChEBI" id="CHEBI:29108"/>
        <label>1</label>
    </ligand>
</feature>
<feature type="binding site" evidence="5">
    <location>
        <position position="115"/>
    </location>
    <ligand>
        <name>Ca(2+)</name>
        <dbReference type="ChEBI" id="CHEBI:29108"/>
        <label>1</label>
    </ligand>
</feature>
<feature type="binding site" evidence="5">
    <location>
        <position position="117"/>
    </location>
    <ligand>
        <name>Ca(2+)</name>
        <dbReference type="ChEBI" id="CHEBI:29108"/>
        <label>1</label>
    </ligand>
</feature>
<feature type="binding site" evidence="5">
    <location>
        <position position="122"/>
    </location>
    <ligand>
        <name>Ca(2+)</name>
        <dbReference type="ChEBI" id="CHEBI:29108"/>
        <label>1</label>
    </ligand>
</feature>
<feature type="binding site" evidence="5">
    <location>
        <position position="150"/>
    </location>
    <ligand>
        <name>Ca(2+)</name>
        <dbReference type="ChEBI" id="CHEBI:29108"/>
        <label>2</label>
    </ligand>
</feature>
<feature type="binding site" evidence="5">
    <location>
        <position position="152"/>
    </location>
    <ligand>
        <name>Ca(2+)</name>
        <dbReference type="ChEBI" id="CHEBI:29108"/>
        <label>2</label>
    </ligand>
</feature>
<feature type="binding site" evidence="5">
    <location>
        <position position="154"/>
    </location>
    <ligand>
        <name>Ca(2+)</name>
        <dbReference type="ChEBI" id="CHEBI:29108"/>
        <label>2</label>
    </ligand>
</feature>
<feature type="binding site" evidence="5">
    <location>
        <position position="156"/>
    </location>
    <ligand>
        <name>Ca(2+)</name>
        <dbReference type="ChEBI" id="CHEBI:29108"/>
        <label>2</label>
    </ligand>
</feature>
<feature type="binding site" evidence="5">
    <location>
        <position position="161"/>
    </location>
    <ligand>
        <name>Ca(2+)</name>
        <dbReference type="ChEBI" id="CHEBI:29108"/>
        <label>2</label>
    </ligand>
</feature>
<feature type="binding site" evidence="5">
    <location>
        <position position="291"/>
    </location>
    <ligand>
        <name>Ca(2+)</name>
        <dbReference type="ChEBI" id="CHEBI:29108"/>
        <label>3</label>
    </ligand>
</feature>
<feature type="binding site" evidence="5">
    <location>
        <position position="293"/>
    </location>
    <ligand>
        <name>Ca(2+)</name>
        <dbReference type="ChEBI" id="CHEBI:29108"/>
        <label>3</label>
    </ligand>
</feature>
<feature type="binding site" evidence="5">
    <location>
        <position position="295"/>
    </location>
    <ligand>
        <name>Ca(2+)</name>
        <dbReference type="ChEBI" id="CHEBI:29108"/>
        <label>3</label>
    </ligand>
</feature>
<feature type="binding site" evidence="5">
    <location>
        <position position="297"/>
    </location>
    <ligand>
        <name>Ca(2+)</name>
        <dbReference type="ChEBI" id="CHEBI:29108"/>
        <label>3</label>
    </ligand>
</feature>
<feature type="binding site" evidence="5">
    <location>
        <position position="302"/>
    </location>
    <ligand>
        <name>Ca(2+)</name>
        <dbReference type="ChEBI" id="CHEBI:29108"/>
        <label>3</label>
    </ligand>
</feature>
<feature type="binding site" evidence="5">
    <location>
        <position position="336"/>
    </location>
    <ligand>
        <name>Ca(2+)</name>
        <dbReference type="ChEBI" id="CHEBI:29108"/>
        <label>4</label>
    </ligand>
</feature>
<feature type="binding site" evidence="5">
    <location>
        <position position="338"/>
    </location>
    <ligand>
        <name>Ca(2+)</name>
        <dbReference type="ChEBI" id="CHEBI:29108"/>
        <label>4</label>
    </ligand>
</feature>
<feature type="binding site" evidence="5">
    <location>
        <position position="340"/>
    </location>
    <ligand>
        <name>Ca(2+)</name>
        <dbReference type="ChEBI" id="CHEBI:29108"/>
        <label>4</label>
    </ligand>
</feature>
<feature type="binding site" evidence="5">
    <location>
        <position position="347"/>
    </location>
    <ligand>
        <name>Ca(2+)</name>
        <dbReference type="ChEBI" id="CHEBI:29108"/>
        <label>4</label>
    </ligand>
</feature>
<feature type="binding site" evidence="5">
    <location>
        <position position="372"/>
    </location>
    <ligand>
        <name>Ca(2+)</name>
        <dbReference type="ChEBI" id="CHEBI:29108"/>
        <label>5</label>
    </ligand>
</feature>
<feature type="binding site" evidence="5">
    <location>
        <position position="374"/>
    </location>
    <ligand>
        <name>Ca(2+)</name>
        <dbReference type="ChEBI" id="CHEBI:29108"/>
        <label>5</label>
    </ligand>
</feature>
<feature type="binding site" evidence="5">
    <location>
        <position position="376"/>
    </location>
    <ligand>
        <name>Ca(2+)</name>
        <dbReference type="ChEBI" id="CHEBI:29108"/>
        <label>5</label>
    </ligand>
</feature>
<feature type="binding site" evidence="5">
    <location>
        <position position="378"/>
    </location>
    <ligand>
        <name>Ca(2+)</name>
        <dbReference type="ChEBI" id="CHEBI:29108"/>
        <label>5</label>
    </ligand>
</feature>
<feature type="binding site" evidence="5">
    <location>
        <position position="383"/>
    </location>
    <ligand>
        <name>Ca(2+)</name>
        <dbReference type="ChEBI" id="CHEBI:29108"/>
        <label>5</label>
    </ligand>
</feature>
<feature type="modified residue" description="Phosphoserine" evidence="3">
    <location>
        <position position="99"/>
    </location>
</feature>
<feature type="modified residue" description="Phosphothreonine" evidence="3">
    <location>
        <position position="193"/>
    </location>
</feature>
<feature type="modified residue" description="Phosphothreonine" evidence="3">
    <location>
        <position position="217"/>
    </location>
</feature>
<feature type="modified residue" description="Phosphothreonine" evidence="3">
    <location>
        <position position="310"/>
    </location>
</feature>
<feature type="modified residue" description="Phosphothreonine" evidence="3">
    <location>
        <position position="344"/>
    </location>
</feature>
<feature type="glycosylation site" description="N-linked (GlcNAc...) asparagine" evidence="4">
    <location>
        <position position="40"/>
    </location>
</feature>
<keyword id="KW-0106">Calcium</keyword>
<keyword id="KW-0325">Glycoprotein</keyword>
<keyword id="KW-0333">Golgi apparatus</keyword>
<keyword id="KW-0479">Metal-binding</keyword>
<keyword id="KW-0597">Phosphoprotein</keyword>
<keyword id="KW-1185">Reference proteome</keyword>
<keyword id="KW-0677">Repeat</keyword>
<keyword id="KW-0732">Signal</keyword>
<accession>Q4R585</accession>
<reference key="1">
    <citation type="submission" date="2005-06" db="EMBL/GenBank/DDBJ databases">
        <title>DNA sequences of macaque genes expressed in brain or testis and its evolutionary implications.</title>
        <authorList>
            <consortium name="International consortium for macaque cDNA sequencing and analysis"/>
        </authorList>
    </citation>
    <scope>NUCLEOTIDE SEQUENCE [LARGE SCALE MRNA]</scope>
    <source>
        <tissue>Brain cortex</tissue>
    </source>
</reference>
<comment type="function">
    <text evidence="1">May regulate calcium-dependent activities in the endoplasmic reticulum lumen or post-ER compartment.</text>
</comment>
<comment type="subcellular location">
    <subcellularLocation>
        <location evidence="2">Golgi apparatus lumen</location>
    </subcellularLocation>
</comment>
<comment type="domain">
    <text evidence="1">Binds calcium via its EF-hands.</text>
</comment>
<comment type="similarity">
    <text evidence="7">Belongs to the CREC family.</text>
</comment>